<accession>P67407</accession>
<accession>Q99RY3</accession>
<comment type="catalytic activity">
    <reaction evidence="1">
        <text>urea + 2 H2O + H(+) = hydrogencarbonate + 2 NH4(+)</text>
        <dbReference type="Rhea" id="RHEA:20557"/>
        <dbReference type="ChEBI" id="CHEBI:15377"/>
        <dbReference type="ChEBI" id="CHEBI:15378"/>
        <dbReference type="ChEBI" id="CHEBI:16199"/>
        <dbReference type="ChEBI" id="CHEBI:17544"/>
        <dbReference type="ChEBI" id="CHEBI:28938"/>
        <dbReference type="EC" id="3.5.1.5"/>
    </reaction>
</comment>
<comment type="pathway">
    <text evidence="1">Nitrogen metabolism; urea degradation; CO(2) and NH(3) from urea (urease route): step 1/1.</text>
</comment>
<comment type="subunit">
    <text evidence="1">Heterotrimer of UreA (gamma), UreB (beta) and UreC (alpha) subunits. Three heterotrimers associate to form the active enzyme.</text>
</comment>
<comment type="subcellular location">
    <subcellularLocation>
        <location evidence="1">Cytoplasm</location>
    </subcellularLocation>
</comment>
<comment type="similarity">
    <text evidence="1">Belongs to the urease beta subunit family.</text>
</comment>
<proteinExistence type="inferred from homology"/>
<gene>
    <name evidence="1" type="primary">ureB</name>
    <name type="ordered locus">SA2083</name>
</gene>
<name>URE2_STAAN</name>
<feature type="chain" id="PRO_0000067589" description="Urease subunit beta">
    <location>
        <begin position="1"/>
        <end position="136"/>
    </location>
</feature>
<keyword id="KW-0963">Cytoplasm</keyword>
<keyword id="KW-0378">Hydrolase</keyword>
<dbReference type="EC" id="3.5.1.5" evidence="1"/>
<dbReference type="EMBL" id="BA000018">
    <property type="protein sequence ID" value="BAB43381.1"/>
    <property type="molecule type" value="Genomic_DNA"/>
</dbReference>
<dbReference type="PIR" id="D90027">
    <property type="entry name" value="D90027"/>
</dbReference>
<dbReference type="RefSeq" id="WP_000612126.1">
    <property type="nucleotide sequence ID" value="NC_002745.2"/>
</dbReference>
<dbReference type="SMR" id="P67407"/>
<dbReference type="EnsemblBacteria" id="BAB43381">
    <property type="protein sequence ID" value="BAB43381"/>
    <property type="gene ID" value="BAB43381"/>
</dbReference>
<dbReference type="KEGG" id="sau:SA2083"/>
<dbReference type="HOGENOM" id="CLU_129707_2_2_9"/>
<dbReference type="UniPathway" id="UPA00258">
    <property type="reaction ID" value="UER00370"/>
</dbReference>
<dbReference type="GO" id="GO:0035550">
    <property type="term" value="C:urease complex"/>
    <property type="evidence" value="ECO:0007669"/>
    <property type="project" value="InterPro"/>
</dbReference>
<dbReference type="GO" id="GO:0009039">
    <property type="term" value="F:urease activity"/>
    <property type="evidence" value="ECO:0007669"/>
    <property type="project" value="UniProtKB-UniRule"/>
</dbReference>
<dbReference type="GO" id="GO:0043419">
    <property type="term" value="P:urea catabolic process"/>
    <property type="evidence" value="ECO:0007669"/>
    <property type="project" value="UniProtKB-UniRule"/>
</dbReference>
<dbReference type="CDD" id="cd00407">
    <property type="entry name" value="Urease_beta"/>
    <property type="match status" value="1"/>
</dbReference>
<dbReference type="FunFam" id="2.10.150.10:FF:000001">
    <property type="entry name" value="Urease subunit beta"/>
    <property type="match status" value="1"/>
</dbReference>
<dbReference type="Gene3D" id="2.10.150.10">
    <property type="entry name" value="Urease, beta subunit"/>
    <property type="match status" value="1"/>
</dbReference>
<dbReference type="HAMAP" id="MF_01954">
    <property type="entry name" value="Urease_beta"/>
    <property type="match status" value="1"/>
</dbReference>
<dbReference type="InterPro" id="IPR002019">
    <property type="entry name" value="Urease_beta-like"/>
</dbReference>
<dbReference type="InterPro" id="IPR036461">
    <property type="entry name" value="Urease_betasu_sf"/>
</dbReference>
<dbReference type="InterPro" id="IPR050069">
    <property type="entry name" value="Urease_subunit"/>
</dbReference>
<dbReference type="NCBIfam" id="NF009682">
    <property type="entry name" value="PRK13203.1"/>
    <property type="match status" value="1"/>
</dbReference>
<dbReference type="NCBIfam" id="TIGR00192">
    <property type="entry name" value="urease_beta"/>
    <property type="match status" value="1"/>
</dbReference>
<dbReference type="PANTHER" id="PTHR33569">
    <property type="entry name" value="UREASE"/>
    <property type="match status" value="1"/>
</dbReference>
<dbReference type="PANTHER" id="PTHR33569:SF1">
    <property type="entry name" value="UREASE"/>
    <property type="match status" value="1"/>
</dbReference>
<dbReference type="Pfam" id="PF00699">
    <property type="entry name" value="Urease_beta"/>
    <property type="match status" value="1"/>
</dbReference>
<dbReference type="SUPFAM" id="SSF51278">
    <property type="entry name" value="Urease, beta-subunit"/>
    <property type="match status" value="1"/>
</dbReference>
<organism>
    <name type="scientific">Staphylococcus aureus (strain N315)</name>
    <dbReference type="NCBI Taxonomy" id="158879"/>
    <lineage>
        <taxon>Bacteria</taxon>
        <taxon>Bacillati</taxon>
        <taxon>Bacillota</taxon>
        <taxon>Bacilli</taxon>
        <taxon>Bacillales</taxon>
        <taxon>Staphylococcaceae</taxon>
        <taxon>Staphylococcus</taxon>
    </lineage>
</organism>
<reference key="1">
    <citation type="journal article" date="2001" name="Lancet">
        <title>Whole genome sequencing of meticillin-resistant Staphylococcus aureus.</title>
        <authorList>
            <person name="Kuroda M."/>
            <person name="Ohta T."/>
            <person name="Uchiyama I."/>
            <person name="Baba T."/>
            <person name="Yuzawa H."/>
            <person name="Kobayashi I."/>
            <person name="Cui L."/>
            <person name="Oguchi A."/>
            <person name="Aoki K."/>
            <person name="Nagai Y."/>
            <person name="Lian J.-Q."/>
            <person name="Ito T."/>
            <person name="Kanamori M."/>
            <person name="Matsumaru H."/>
            <person name="Maruyama A."/>
            <person name="Murakami H."/>
            <person name="Hosoyama A."/>
            <person name="Mizutani-Ui Y."/>
            <person name="Takahashi N.K."/>
            <person name="Sawano T."/>
            <person name="Inoue R."/>
            <person name="Kaito C."/>
            <person name="Sekimizu K."/>
            <person name="Hirakawa H."/>
            <person name="Kuhara S."/>
            <person name="Goto S."/>
            <person name="Yabuzaki J."/>
            <person name="Kanehisa M."/>
            <person name="Yamashita A."/>
            <person name="Oshima K."/>
            <person name="Furuya K."/>
            <person name="Yoshino C."/>
            <person name="Shiba T."/>
            <person name="Hattori M."/>
            <person name="Ogasawara N."/>
            <person name="Hayashi H."/>
            <person name="Hiramatsu K."/>
        </authorList>
    </citation>
    <scope>NUCLEOTIDE SEQUENCE [LARGE SCALE GENOMIC DNA]</scope>
    <source>
        <strain>N315</strain>
    </source>
</reference>
<sequence>MIPGEIITKSTEVEINNHHPETVIEVENTGDRPIQVGSHFHFYEANAALDFEREMAYGKHLDIPAGAAVRFEPGDKKEVQLVEYAGKRKIFGFRGMVNGPIDESRVYRPTDENDAYAGVFGDNGAENVNKKGGKRS</sequence>
<protein>
    <recommendedName>
        <fullName evidence="1">Urease subunit beta</fullName>
        <ecNumber evidence="1">3.5.1.5</ecNumber>
    </recommendedName>
    <alternativeName>
        <fullName evidence="1">Urea amidohydrolase subunit beta</fullName>
    </alternativeName>
</protein>
<evidence type="ECO:0000255" key="1">
    <source>
        <dbReference type="HAMAP-Rule" id="MF_01954"/>
    </source>
</evidence>